<keyword id="KW-1185">Reference proteome</keyword>
<keyword id="KW-0687">Ribonucleoprotein</keyword>
<keyword id="KW-0689">Ribosomal protein</keyword>
<keyword id="KW-0694">RNA-binding</keyword>
<keyword id="KW-0699">rRNA-binding</keyword>
<sequence length="102" mass="11114">MQKIRKGDKVVVLTGKDKGRSGEVIQVMPKEDRAVVQGINVVKRHQRQTQTQEAGIINKEASVHLSNLAIADKDGKPTRVGFSVVDGKKVRVAKRSGEVIDG</sequence>
<evidence type="ECO:0000255" key="1">
    <source>
        <dbReference type="HAMAP-Rule" id="MF_01326"/>
    </source>
</evidence>
<evidence type="ECO:0000305" key="2"/>
<protein>
    <recommendedName>
        <fullName evidence="1">Large ribosomal subunit protein uL24</fullName>
    </recommendedName>
    <alternativeName>
        <fullName evidence="2">50S ribosomal protein L24</fullName>
    </alternativeName>
</protein>
<reference key="1">
    <citation type="journal article" date="2009" name="J. Bacteriol.">
        <title>Genome sequences of three Agrobacterium biovars help elucidate the evolution of multichromosome genomes in bacteria.</title>
        <authorList>
            <person name="Slater S.C."/>
            <person name="Goldman B.S."/>
            <person name="Goodner B."/>
            <person name="Setubal J.C."/>
            <person name="Farrand S.K."/>
            <person name="Nester E.W."/>
            <person name="Burr T.J."/>
            <person name="Banta L."/>
            <person name="Dickerman A.W."/>
            <person name="Paulsen I."/>
            <person name="Otten L."/>
            <person name="Suen G."/>
            <person name="Welch R."/>
            <person name="Almeida N.F."/>
            <person name="Arnold F."/>
            <person name="Burton O.T."/>
            <person name="Du Z."/>
            <person name="Ewing A."/>
            <person name="Godsy E."/>
            <person name="Heisel S."/>
            <person name="Houmiel K.L."/>
            <person name="Jhaveri J."/>
            <person name="Lu J."/>
            <person name="Miller N.M."/>
            <person name="Norton S."/>
            <person name="Chen Q."/>
            <person name="Phoolcharoen W."/>
            <person name="Ohlin V."/>
            <person name="Ondrusek D."/>
            <person name="Pride N."/>
            <person name="Stricklin S.L."/>
            <person name="Sun J."/>
            <person name="Wheeler C."/>
            <person name="Wilson L."/>
            <person name="Zhu H."/>
            <person name="Wood D.W."/>
        </authorList>
    </citation>
    <scope>NUCLEOTIDE SEQUENCE [LARGE SCALE GENOMIC DNA]</scope>
    <source>
        <strain>ATCC BAA-846 / DSM 112012 / S4</strain>
    </source>
</reference>
<organism>
    <name type="scientific">Allorhizobium ampelinum (strain ATCC BAA-846 / DSM 112012 / S4)</name>
    <name type="common">Agrobacterium vitis (strain S4)</name>
    <dbReference type="NCBI Taxonomy" id="311402"/>
    <lineage>
        <taxon>Bacteria</taxon>
        <taxon>Pseudomonadati</taxon>
        <taxon>Pseudomonadota</taxon>
        <taxon>Alphaproteobacteria</taxon>
        <taxon>Hyphomicrobiales</taxon>
        <taxon>Rhizobiaceae</taxon>
        <taxon>Rhizobium/Agrobacterium group</taxon>
        <taxon>Allorhizobium</taxon>
        <taxon>Allorhizobium ampelinum</taxon>
    </lineage>
</organism>
<dbReference type="EMBL" id="CP000633">
    <property type="protein sequence ID" value="ACM36328.1"/>
    <property type="molecule type" value="Genomic_DNA"/>
</dbReference>
<dbReference type="RefSeq" id="WP_015915749.1">
    <property type="nucleotide sequence ID" value="NC_011989.1"/>
</dbReference>
<dbReference type="SMR" id="B9JVP8"/>
<dbReference type="STRING" id="311402.Avi_1851"/>
<dbReference type="GeneID" id="60682414"/>
<dbReference type="KEGG" id="avi:Avi_1851"/>
<dbReference type="eggNOG" id="COG0198">
    <property type="taxonomic scope" value="Bacteria"/>
</dbReference>
<dbReference type="HOGENOM" id="CLU_093315_2_2_5"/>
<dbReference type="Proteomes" id="UP000001596">
    <property type="component" value="Chromosome 1"/>
</dbReference>
<dbReference type="GO" id="GO:1990904">
    <property type="term" value="C:ribonucleoprotein complex"/>
    <property type="evidence" value="ECO:0007669"/>
    <property type="project" value="UniProtKB-KW"/>
</dbReference>
<dbReference type="GO" id="GO:0005840">
    <property type="term" value="C:ribosome"/>
    <property type="evidence" value="ECO:0007669"/>
    <property type="project" value="UniProtKB-KW"/>
</dbReference>
<dbReference type="GO" id="GO:0019843">
    <property type="term" value="F:rRNA binding"/>
    <property type="evidence" value="ECO:0007669"/>
    <property type="project" value="UniProtKB-UniRule"/>
</dbReference>
<dbReference type="GO" id="GO:0003735">
    <property type="term" value="F:structural constituent of ribosome"/>
    <property type="evidence" value="ECO:0007669"/>
    <property type="project" value="InterPro"/>
</dbReference>
<dbReference type="GO" id="GO:0006412">
    <property type="term" value="P:translation"/>
    <property type="evidence" value="ECO:0007669"/>
    <property type="project" value="UniProtKB-UniRule"/>
</dbReference>
<dbReference type="CDD" id="cd06089">
    <property type="entry name" value="KOW_RPL26"/>
    <property type="match status" value="1"/>
</dbReference>
<dbReference type="FunFam" id="2.30.30.30:FF:000004">
    <property type="entry name" value="50S ribosomal protein L24"/>
    <property type="match status" value="1"/>
</dbReference>
<dbReference type="Gene3D" id="2.30.30.30">
    <property type="match status" value="1"/>
</dbReference>
<dbReference type="HAMAP" id="MF_01326_B">
    <property type="entry name" value="Ribosomal_uL24_B"/>
    <property type="match status" value="1"/>
</dbReference>
<dbReference type="InterPro" id="IPR005824">
    <property type="entry name" value="KOW"/>
</dbReference>
<dbReference type="InterPro" id="IPR014722">
    <property type="entry name" value="Rib_uL2_dom2"/>
</dbReference>
<dbReference type="InterPro" id="IPR003256">
    <property type="entry name" value="Ribosomal_uL24"/>
</dbReference>
<dbReference type="InterPro" id="IPR005825">
    <property type="entry name" value="Ribosomal_uL24_CS"/>
</dbReference>
<dbReference type="InterPro" id="IPR041988">
    <property type="entry name" value="Ribosomal_uL24_KOW"/>
</dbReference>
<dbReference type="InterPro" id="IPR008991">
    <property type="entry name" value="Translation_prot_SH3-like_sf"/>
</dbReference>
<dbReference type="NCBIfam" id="TIGR01079">
    <property type="entry name" value="rplX_bact"/>
    <property type="match status" value="1"/>
</dbReference>
<dbReference type="PANTHER" id="PTHR12903">
    <property type="entry name" value="MITOCHONDRIAL RIBOSOMAL PROTEIN L24"/>
    <property type="match status" value="1"/>
</dbReference>
<dbReference type="Pfam" id="PF00467">
    <property type="entry name" value="KOW"/>
    <property type="match status" value="1"/>
</dbReference>
<dbReference type="Pfam" id="PF17136">
    <property type="entry name" value="ribosomal_L24"/>
    <property type="match status" value="1"/>
</dbReference>
<dbReference type="SMART" id="SM00739">
    <property type="entry name" value="KOW"/>
    <property type="match status" value="1"/>
</dbReference>
<dbReference type="SUPFAM" id="SSF50104">
    <property type="entry name" value="Translation proteins SH3-like domain"/>
    <property type="match status" value="1"/>
</dbReference>
<dbReference type="PROSITE" id="PS01108">
    <property type="entry name" value="RIBOSOMAL_L24"/>
    <property type="match status" value="1"/>
</dbReference>
<gene>
    <name evidence="1" type="primary">rplX</name>
    <name type="ordered locus">Avi_1851</name>
</gene>
<comment type="function">
    <text evidence="1">One of two assembly initiator proteins, it binds directly to the 5'-end of the 23S rRNA, where it nucleates assembly of the 50S subunit.</text>
</comment>
<comment type="function">
    <text evidence="1">One of the proteins that surrounds the polypeptide exit tunnel on the outside of the subunit.</text>
</comment>
<comment type="subunit">
    <text evidence="1">Part of the 50S ribosomal subunit.</text>
</comment>
<comment type="similarity">
    <text evidence="1">Belongs to the universal ribosomal protein uL24 family.</text>
</comment>
<accession>B9JVP8</accession>
<name>RL24_ALLAM</name>
<feature type="chain" id="PRO_1000165919" description="Large ribosomal subunit protein uL24">
    <location>
        <begin position="1"/>
        <end position="102"/>
    </location>
</feature>
<proteinExistence type="inferred from homology"/>